<evidence type="ECO:0000255" key="1">
    <source>
        <dbReference type="HAMAP-Rule" id="MF_01322"/>
    </source>
</evidence>
<evidence type="ECO:0000305" key="2"/>
<reference key="1">
    <citation type="journal article" date="1988" name="Dokl. Biochem.">
        <title>Nucleotide sequence of the rpoC gene coding for the beta'-subunit of RNA polymerase in Pseudomonas putida.</title>
        <authorList>
            <person name="Danilkovich A.V."/>
            <person name="Borodin A.M."/>
            <person name="Allikmets R.L."/>
            <person name="Rostapshov V.M."/>
            <person name="Chernov I.P."/>
            <person name="Azhikina T.L."/>
            <person name="Monastyrskaya G.S."/>
            <person name="Sverdlov E.D."/>
        </authorList>
    </citation>
    <scope>NUCLEOTIDE SEQUENCE [GENOMIC DNA]</scope>
</reference>
<reference key="2">
    <citation type="journal article" date="1988" name="Bioorg. Khim.">
        <title>Genes coding for RNA polymerase in bacteria. III. The use of modified Sanger's method for sequencing the C-terminal region of rpoB gene, N-terminal region of rpoC gene and intercistron region of RNA polymerase in Pseudomonas putida.</title>
        <authorList>
            <person name="Borodin A.M."/>
            <person name="Danilkovich A.V."/>
            <person name="Chernov I.P."/>
            <person name="Azhykina T.L."/>
            <person name="Rostapshov V.M."/>
            <person name="Monastyrskaya G.S."/>
        </authorList>
    </citation>
    <scope>NUCLEOTIDE SEQUENCE [GENOMIC DNA] OF 1-497</scope>
</reference>
<accession>P19176</accession>
<dbReference type="EC" id="2.7.7.6" evidence="1"/>
<dbReference type="EMBL" id="X16538">
    <property type="protein sequence ID" value="CAA34538.1"/>
    <property type="status" value="ALT_INIT"/>
    <property type="molecule type" value="Genomic_DNA"/>
</dbReference>
<dbReference type="EMBL" id="M38319">
    <property type="protein sequence ID" value="AAA25987.1"/>
    <property type="status" value="ALT_INIT"/>
    <property type="molecule type" value="Genomic_DNA"/>
</dbReference>
<dbReference type="PIR" id="JN0420">
    <property type="entry name" value="JN0420"/>
</dbReference>
<dbReference type="SMR" id="P19176"/>
<dbReference type="eggNOG" id="COG0086">
    <property type="taxonomic scope" value="Bacteria"/>
</dbReference>
<dbReference type="GO" id="GO:0000428">
    <property type="term" value="C:DNA-directed RNA polymerase complex"/>
    <property type="evidence" value="ECO:0007669"/>
    <property type="project" value="UniProtKB-KW"/>
</dbReference>
<dbReference type="GO" id="GO:0003677">
    <property type="term" value="F:DNA binding"/>
    <property type="evidence" value="ECO:0007669"/>
    <property type="project" value="UniProtKB-UniRule"/>
</dbReference>
<dbReference type="GO" id="GO:0003899">
    <property type="term" value="F:DNA-directed RNA polymerase activity"/>
    <property type="evidence" value="ECO:0007669"/>
    <property type="project" value="UniProtKB-UniRule"/>
</dbReference>
<dbReference type="GO" id="GO:0000287">
    <property type="term" value="F:magnesium ion binding"/>
    <property type="evidence" value="ECO:0007669"/>
    <property type="project" value="UniProtKB-UniRule"/>
</dbReference>
<dbReference type="GO" id="GO:0008270">
    <property type="term" value="F:zinc ion binding"/>
    <property type="evidence" value="ECO:0007669"/>
    <property type="project" value="UniProtKB-UniRule"/>
</dbReference>
<dbReference type="GO" id="GO:0006351">
    <property type="term" value="P:DNA-templated transcription"/>
    <property type="evidence" value="ECO:0007669"/>
    <property type="project" value="UniProtKB-UniRule"/>
</dbReference>
<dbReference type="CDD" id="cd02655">
    <property type="entry name" value="RNAP_beta'_C"/>
    <property type="match status" value="1"/>
</dbReference>
<dbReference type="CDD" id="cd01609">
    <property type="entry name" value="RNAP_beta'_N"/>
    <property type="match status" value="1"/>
</dbReference>
<dbReference type="FunFam" id="1.10.132.30:FF:000003">
    <property type="entry name" value="DNA-directed RNA polymerase subunit beta"/>
    <property type="match status" value="1"/>
</dbReference>
<dbReference type="FunFam" id="1.10.150.390:FF:000002">
    <property type="entry name" value="DNA-directed RNA polymerase subunit beta"/>
    <property type="match status" value="1"/>
</dbReference>
<dbReference type="FunFam" id="1.10.40.90:FF:000001">
    <property type="entry name" value="DNA-directed RNA polymerase subunit beta"/>
    <property type="match status" value="1"/>
</dbReference>
<dbReference type="Gene3D" id="1.10.132.30">
    <property type="match status" value="1"/>
</dbReference>
<dbReference type="Gene3D" id="1.10.150.390">
    <property type="match status" value="1"/>
</dbReference>
<dbReference type="Gene3D" id="1.10.1790.20">
    <property type="match status" value="1"/>
</dbReference>
<dbReference type="Gene3D" id="1.10.40.90">
    <property type="match status" value="1"/>
</dbReference>
<dbReference type="Gene3D" id="2.40.40.20">
    <property type="match status" value="1"/>
</dbReference>
<dbReference type="Gene3D" id="2.40.50.100">
    <property type="match status" value="3"/>
</dbReference>
<dbReference type="Gene3D" id="4.10.860.120">
    <property type="entry name" value="RNA polymerase II, clamp domain"/>
    <property type="match status" value="1"/>
</dbReference>
<dbReference type="Gene3D" id="1.10.274.100">
    <property type="entry name" value="RNA polymerase Rpb1, domain 3"/>
    <property type="match status" value="2"/>
</dbReference>
<dbReference type="HAMAP" id="MF_01322">
    <property type="entry name" value="RNApol_bact_RpoC"/>
    <property type="match status" value="1"/>
</dbReference>
<dbReference type="InterPro" id="IPR045867">
    <property type="entry name" value="DNA-dir_RpoC_beta_prime"/>
</dbReference>
<dbReference type="InterPro" id="IPR012754">
    <property type="entry name" value="DNA-dir_RpoC_beta_prime_bact"/>
</dbReference>
<dbReference type="InterPro" id="IPR000722">
    <property type="entry name" value="RNA_pol_asu"/>
</dbReference>
<dbReference type="InterPro" id="IPR006592">
    <property type="entry name" value="RNA_pol_N"/>
</dbReference>
<dbReference type="InterPro" id="IPR007080">
    <property type="entry name" value="RNA_pol_Rpb1_1"/>
</dbReference>
<dbReference type="InterPro" id="IPR007066">
    <property type="entry name" value="RNA_pol_Rpb1_3"/>
</dbReference>
<dbReference type="InterPro" id="IPR042102">
    <property type="entry name" value="RNA_pol_Rpb1_3_sf"/>
</dbReference>
<dbReference type="InterPro" id="IPR007083">
    <property type="entry name" value="RNA_pol_Rpb1_4"/>
</dbReference>
<dbReference type="InterPro" id="IPR007081">
    <property type="entry name" value="RNA_pol_Rpb1_5"/>
</dbReference>
<dbReference type="InterPro" id="IPR044893">
    <property type="entry name" value="RNA_pol_Rpb1_clamp_domain"/>
</dbReference>
<dbReference type="InterPro" id="IPR038120">
    <property type="entry name" value="Rpb1_funnel_sf"/>
</dbReference>
<dbReference type="NCBIfam" id="TIGR02386">
    <property type="entry name" value="rpoC_TIGR"/>
    <property type="match status" value="1"/>
</dbReference>
<dbReference type="PANTHER" id="PTHR19376">
    <property type="entry name" value="DNA-DIRECTED RNA POLYMERASE"/>
    <property type="match status" value="1"/>
</dbReference>
<dbReference type="PANTHER" id="PTHR19376:SF54">
    <property type="entry name" value="DNA-DIRECTED RNA POLYMERASE SUBUNIT BETA"/>
    <property type="match status" value="1"/>
</dbReference>
<dbReference type="Pfam" id="PF04997">
    <property type="entry name" value="RNA_pol_Rpb1_1"/>
    <property type="match status" value="1"/>
</dbReference>
<dbReference type="Pfam" id="PF00623">
    <property type="entry name" value="RNA_pol_Rpb1_2"/>
    <property type="match status" value="2"/>
</dbReference>
<dbReference type="Pfam" id="PF04983">
    <property type="entry name" value="RNA_pol_Rpb1_3"/>
    <property type="match status" value="1"/>
</dbReference>
<dbReference type="Pfam" id="PF05000">
    <property type="entry name" value="RNA_pol_Rpb1_4"/>
    <property type="match status" value="1"/>
</dbReference>
<dbReference type="Pfam" id="PF04998">
    <property type="entry name" value="RNA_pol_Rpb1_5"/>
    <property type="match status" value="1"/>
</dbReference>
<dbReference type="SMART" id="SM00663">
    <property type="entry name" value="RPOLA_N"/>
    <property type="match status" value="1"/>
</dbReference>
<dbReference type="SUPFAM" id="SSF64484">
    <property type="entry name" value="beta and beta-prime subunits of DNA dependent RNA-polymerase"/>
    <property type="match status" value="1"/>
</dbReference>
<sequence>MKDLLNLLKNQGQVEEFDAIRIGLASPEMIRSWSFGEVKKPETINYRTFKPERDGLFCAKIFGPVKDYECLCGKYKRLKHRGVICEKCGVEVALGKVAAERMGHIELACGLAHIWFLKSLPSRIGLLMDMTLRDIERVLYFESYVVIDPGMTTLEKGQLLNDEQYFEALEEFGDDFDAAMGAEAVRELLHAIDLEHEIGPLREEIPQTNSETKIKKLSKRLKLMEAFQGIGNLPEWMVLTVLPVVPAPLGPLVPLDGGRFATSDLNDLYRRVINRNNRLKRQLDLSAPDIIVRNEKPMLQEAVEPLLDNGACGVAIIGSNKRPLKSLADMIKGKQGLFRQNLLGKRVDYSGRSVISVGPTLRLHQCGLPKKMALELFKPFIFGKLEMRGLATTIKAAKKMVERELPEVWDVLAEVIREHPVLLNRAPTLHRLGIQAFEPVLIEGKAIQLHPLVCARYNADFDGDQMAVDVPLTLEAQLENGALMMSTNNILSPANGEPIIVPSQDVVLGLYYMTREAINAKGEGRVFADLQEVDRVFRAGEAALHAKIKVRINETVKERDGSVVKNTRIVDTTVGRALLFQVVPGGLPYDVVNQPMKKKAISKLINQCYRVVGLKETVIFADQLMYTGFAYSTISGVSIGVNDFVIPDEKARIIGNATDEVKEIESQYASGLVTQGEKYNKVIDLWSKANDEVSKAMMANLSKEKVIDREGKEVEQESFNSMYMMADSGAGGSAAQIRQLAGMRGLMAKPDGSIIETPITANFREGLSVLQYFISTHGARKGLADTALKTANSGYLTRRLVDVAQDLVVTEIDCGTDQGLVMTPHIEGGDVVEPLGERVLGRVIARDVFKPGTEDVIVPAGTLVDEQWVEFIELNSIDEVIVRSPINCETRYGICAKCYGRDLARGHQVNIGEAVGVIAAQSIGEPGTQLTMRTFHIGGAASRTSAADSVQVKNGGMGASRNLKQVERADGNLVAVSRSGELAIADEFGRECEYKLPYGAVISVKEGEKVEAGAIVAKWDPHTHPIVTELKGTVTFVGMEENITIKRQTDELTGLTNIEVLDVKDRPAARRHTLRPAIKMVDAAGKDLYLPGTDVPAQYFLPANALVGVADGAQIGVGDVIARIPQETSKTRDITGGLPRVADLFEARRPKEASILAEVSGTIAFGKETKGKRRLVITPTDGSEPYEELIPKWRHLNVFEGEQVNRGEVISDGPSDPDDILRLLGVSALGKYIDNEIQDVYRLQGVKINDKHIETILRQMLRKVRISESGDSSFIKGDQMEYPGAGRERASASEDKFISKFTRVLLGITKASLSTESFISAASFQETTRVLTEAAVTGKRDYLRGLKENVVVGRLIPAGTGLAYHTERMARRDADKPLRVSASEVEAALTEALNSSGN</sequence>
<protein>
    <recommendedName>
        <fullName evidence="1">DNA-directed RNA polymerase subunit beta'</fullName>
        <shortName evidence="1">RNAP subunit beta'</shortName>
        <ecNumber evidence="1">2.7.7.6</ecNumber>
    </recommendedName>
    <alternativeName>
        <fullName evidence="1">RNA polymerase subunit beta'</fullName>
    </alternativeName>
    <alternativeName>
        <fullName evidence="1">Transcriptase subunit beta'</fullName>
    </alternativeName>
</protein>
<proteinExistence type="inferred from homology"/>
<feature type="chain" id="PRO_0000067779" description="DNA-directed RNA polymerase subunit beta'">
    <location>
        <begin position="1"/>
        <end position="1398"/>
    </location>
</feature>
<feature type="binding site" evidence="1">
    <location>
        <position position="70"/>
    </location>
    <ligand>
        <name>Zn(2+)</name>
        <dbReference type="ChEBI" id="CHEBI:29105"/>
        <label>1</label>
    </ligand>
</feature>
<feature type="binding site" evidence="1">
    <location>
        <position position="72"/>
    </location>
    <ligand>
        <name>Zn(2+)</name>
        <dbReference type="ChEBI" id="CHEBI:29105"/>
        <label>1</label>
    </ligand>
</feature>
<feature type="binding site" evidence="1">
    <location>
        <position position="85"/>
    </location>
    <ligand>
        <name>Zn(2+)</name>
        <dbReference type="ChEBI" id="CHEBI:29105"/>
        <label>1</label>
    </ligand>
</feature>
<feature type="binding site" evidence="1">
    <location>
        <position position="88"/>
    </location>
    <ligand>
        <name>Zn(2+)</name>
        <dbReference type="ChEBI" id="CHEBI:29105"/>
        <label>1</label>
    </ligand>
</feature>
<feature type="binding site" evidence="1">
    <location>
        <position position="460"/>
    </location>
    <ligand>
        <name>Mg(2+)</name>
        <dbReference type="ChEBI" id="CHEBI:18420"/>
    </ligand>
</feature>
<feature type="binding site" evidence="1">
    <location>
        <position position="462"/>
    </location>
    <ligand>
        <name>Mg(2+)</name>
        <dbReference type="ChEBI" id="CHEBI:18420"/>
    </ligand>
</feature>
<feature type="binding site" evidence="1">
    <location>
        <position position="464"/>
    </location>
    <ligand>
        <name>Mg(2+)</name>
        <dbReference type="ChEBI" id="CHEBI:18420"/>
    </ligand>
</feature>
<feature type="binding site" evidence="1">
    <location>
        <position position="814"/>
    </location>
    <ligand>
        <name>Zn(2+)</name>
        <dbReference type="ChEBI" id="CHEBI:29105"/>
        <label>2</label>
    </ligand>
</feature>
<feature type="binding site" evidence="1">
    <location>
        <position position="888"/>
    </location>
    <ligand>
        <name>Zn(2+)</name>
        <dbReference type="ChEBI" id="CHEBI:29105"/>
        <label>2</label>
    </ligand>
</feature>
<feature type="binding site" evidence="1">
    <location>
        <position position="895"/>
    </location>
    <ligand>
        <name>Zn(2+)</name>
        <dbReference type="ChEBI" id="CHEBI:29105"/>
        <label>2</label>
    </ligand>
</feature>
<feature type="binding site" evidence="1">
    <location>
        <position position="898"/>
    </location>
    <ligand>
        <name>Zn(2+)</name>
        <dbReference type="ChEBI" id="CHEBI:29105"/>
        <label>2</label>
    </ligand>
</feature>
<feature type="sequence conflict" description="In Ref. 2; AAA25987." evidence="2" ref="2">
    <original>N</original>
    <variation>I</variation>
    <location>
        <position position="6"/>
    </location>
</feature>
<feature type="sequence conflict" description="In Ref. 2; AAA25987." evidence="2" ref="2">
    <original>L</original>
    <variation>V</variation>
    <location>
        <position position="78"/>
    </location>
</feature>
<feature type="sequence conflict" description="In Ref. 2; AAA25987." evidence="2" ref="2">
    <original>I</original>
    <variation>T</variation>
    <location>
        <position position="192"/>
    </location>
</feature>
<feature type="sequence conflict" description="In Ref. 2; AAA25987." evidence="2" ref="2">
    <original>I</original>
    <variation>T</variation>
    <location>
        <position position="317"/>
    </location>
</feature>
<feature type="sequence conflict" description="In Ref. 2; AAA25987." evidence="2" ref="2">
    <original>L</original>
    <variation>S</variation>
    <location>
        <position position="324"/>
    </location>
</feature>
<feature type="sequence conflict" description="In Ref. 2; AAA25987." evidence="2" ref="2">
    <original>L</original>
    <variation>R</variation>
    <location>
        <position position="337"/>
    </location>
</feature>
<feature type="sequence conflict" description="In Ref. 2; AAA25987." evidence="2" ref="2">
    <original>P</original>
    <variation>L</variation>
    <location>
        <position position="471"/>
    </location>
</feature>
<feature type="sequence conflict" description="In Ref. 2; AAA25987." evidence="2" ref="2">
    <original>T</original>
    <variation>I</variation>
    <location>
        <position position="473"/>
    </location>
</feature>
<name>RPOC_PSEPU</name>
<comment type="function">
    <text evidence="1">DNA-dependent RNA polymerase catalyzes the transcription of DNA into RNA using the four ribonucleoside triphosphates as substrates.</text>
</comment>
<comment type="catalytic activity">
    <reaction evidence="1">
        <text>RNA(n) + a ribonucleoside 5'-triphosphate = RNA(n+1) + diphosphate</text>
        <dbReference type="Rhea" id="RHEA:21248"/>
        <dbReference type="Rhea" id="RHEA-COMP:14527"/>
        <dbReference type="Rhea" id="RHEA-COMP:17342"/>
        <dbReference type="ChEBI" id="CHEBI:33019"/>
        <dbReference type="ChEBI" id="CHEBI:61557"/>
        <dbReference type="ChEBI" id="CHEBI:140395"/>
        <dbReference type="EC" id="2.7.7.6"/>
    </reaction>
</comment>
<comment type="cofactor">
    <cofactor evidence="1">
        <name>Mg(2+)</name>
        <dbReference type="ChEBI" id="CHEBI:18420"/>
    </cofactor>
    <text evidence="1">Binds 1 Mg(2+) ion per subunit.</text>
</comment>
<comment type="cofactor">
    <cofactor evidence="1">
        <name>Zn(2+)</name>
        <dbReference type="ChEBI" id="CHEBI:29105"/>
    </cofactor>
    <text evidence="1">Binds 2 Zn(2+) ions per subunit.</text>
</comment>
<comment type="subunit">
    <text evidence="1">The RNAP catalytic core consists of 2 alpha, 1 beta, 1 beta' and 1 omega subunit. When a sigma factor is associated with the core the holoenzyme is formed, which can initiate transcription.</text>
</comment>
<comment type="similarity">
    <text evidence="1">Belongs to the RNA polymerase beta' chain family.</text>
</comment>
<comment type="sequence caution" evidence="2">
    <conflict type="erroneous initiation">
        <sequence resource="EMBL-CDS" id="AAA25987"/>
    </conflict>
    <text>Extended N-terminus.</text>
</comment>
<comment type="sequence caution" evidence="2">
    <conflict type="erroneous initiation">
        <sequence resource="EMBL-CDS" id="CAA34538"/>
    </conflict>
    <text>Extended N-terminus.</text>
</comment>
<keyword id="KW-0240">DNA-directed RNA polymerase</keyword>
<keyword id="KW-0460">Magnesium</keyword>
<keyword id="KW-0479">Metal-binding</keyword>
<keyword id="KW-0548">Nucleotidyltransferase</keyword>
<keyword id="KW-0804">Transcription</keyword>
<keyword id="KW-0808">Transferase</keyword>
<keyword id="KW-0862">Zinc</keyword>
<gene>
    <name evidence="1" type="primary">rpoC</name>
</gene>
<organism>
    <name type="scientific">Pseudomonas putida</name>
    <name type="common">Arthrobacter siderocapsulatus</name>
    <dbReference type="NCBI Taxonomy" id="303"/>
    <lineage>
        <taxon>Bacteria</taxon>
        <taxon>Pseudomonadati</taxon>
        <taxon>Pseudomonadota</taxon>
        <taxon>Gammaproteobacteria</taxon>
        <taxon>Pseudomonadales</taxon>
        <taxon>Pseudomonadaceae</taxon>
        <taxon>Pseudomonas</taxon>
    </lineage>
</organism>